<organism>
    <name type="scientific">Xenopus laevis</name>
    <name type="common">African clawed frog</name>
    <dbReference type="NCBI Taxonomy" id="8355"/>
    <lineage>
        <taxon>Eukaryota</taxon>
        <taxon>Metazoa</taxon>
        <taxon>Chordata</taxon>
        <taxon>Craniata</taxon>
        <taxon>Vertebrata</taxon>
        <taxon>Euteleostomi</taxon>
        <taxon>Amphibia</taxon>
        <taxon>Batrachia</taxon>
        <taxon>Anura</taxon>
        <taxon>Pipoidea</taxon>
        <taxon>Pipidae</taxon>
        <taxon>Xenopodinae</taxon>
        <taxon>Xenopus</taxon>
        <taxon>Xenopus</taxon>
    </lineage>
</organism>
<name>RB24A_XENLA</name>
<evidence type="ECO:0000250" key="1">
    <source>
        <dbReference type="UniProtKB" id="D3Z4I3"/>
    </source>
</evidence>
<evidence type="ECO:0000250" key="2">
    <source>
        <dbReference type="UniProtKB" id="Q9BX46"/>
    </source>
</evidence>
<evidence type="ECO:0000255" key="3">
    <source>
        <dbReference type="PROSITE-ProRule" id="PRU00176"/>
    </source>
</evidence>
<evidence type="ECO:0000269" key="4">
    <source>
    </source>
</evidence>
<evidence type="ECO:0000269" key="5">
    <source>
    </source>
</evidence>
<evidence type="ECO:0000269" key="6">
    <source>
    </source>
</evidence>
<evidence type="ECO:0000303" key="7">
    <source>
    </source>
</evidence>
<evidence type="ECO:0000305" key="8"/>
<gene>
    <name type="primary">rbm24-a</name>
</gene>
<protein>
    <recommendedName>
        <fullName evidence="8">RNA-binding protein 24-A</fullName>
    </recommendedName>
    <alternativeName>
        <fullName>RNA-binding motif protein 24-A</fullName>
    </alternativeName>
    <alternativeName>
        <fullName evidence="7">RRM domain-containing protein SEB-4</fullName>
        <shortName evidence="7">SEB-4</shortName>
    </alternativeName>
    <alternativeName>
        <fullName>Xseb-4</fullName>
    </alternativeName>
</protein>
<keyword id="KW-0963">Cytoplasm</keyword>
<keyword id="KW-0221">Differentiation</keyword>
<keyword id="KW-0507">mRNA processing</keyword>
<keyword id="KW-0508">mRNA splicing</keyword>
<keyword id="KW-0539">Nucleus</keyword>
<keyword id="KW-1185">Reference proteome</keyword>
<keyword id="KW-0694">RNA-binding</keyword>
<keyword id="KW-0810">Translation regulation</keyword>
<sequence length="225" mass="24027">MHTTQKDTTYTKIFVGGLPYHTTDSSLRKYFEVFGDIEEAVVITDRQTGKSRGYGFVTMADRAAAERACKDPNPIIDGRKANVNLAYLGAKPRIMQPGFAFGVQQIHPALIQRPFGIPAHYVYPQAYVQPGVVIPHVQPTAATSTSPYIDYTSAAYAQYSAAAAAAAYDQYPYAASPAATGYVTAAGYGYAVPQPLTAAAPGSAAAAAAAFGQYQPQQLQADRMQ</sequence>
<accession>Q6GQD3</accession>
<accession>Q9I8R5</accession>
<proteinExistence type="evidence at transcript level"/>
<feature type="chain" id="PRO_0000273373" description="RNA-binding protein 24-A">
    <location>
        <begin position="1"/>
        <end position="225"/>
    </location>
</feature>
<feature type="domain" description="RRM" evidence="3">
    <location>
        <begin position="11"/>
        <end position="88"/>
    </location>
</feature>
<feature type="sequence conflict" description="In Ref. 1; AAF81070." evidence="8" ref="1">
    <original>IF</original>
    <variation>TS</variation>
    <location>
        <begin position="13"/>
        <end position="14"/>
    </location>
</feature>
<feature type="sequence conflict" description="In Ref. 1; AAF81070." evidence="8" ref="1">
    <original>S</original>
    <variation>SAA</variation>
    <location>
        <position position="160"/>
    </location>
</feature>
<reference key="1">
    <citation type="journal article" date="2000" name="Mech. Dev.">
        <title>Expression of the RNA recognition motif-containing protein SEB-4 during Xenopus embryonic development.</title>
        <authorList>
            <person name="Fetka I."/>
            <person name="Radeghieri A."/>
            <person name="Bouwmeester T."/>
        </authorList>
    </citation>
    <scope>NUCLEOTIDE SEQUENCE [MRNA]</scope>
    <scope>SUBCELLULAR LOCATION</scope>
    <scope>DEVELOPMENTAL STAGE</scope>
</reference>
<reference key="2">
    <citation type="submission" date="2004-06" db="EMBL/GenBank/DDBJ databases">
        <authorList>
            <consortium name="NIH - Xenopus Gene Collection (XGC) project"/>
        </authorList>
    </citation>
    <scope>NUCLEOTIDE SEQUENCE [LARGE SCALE MRNA]</scope>
    <source>
        <tissue>Embryo</tissue>
    </source>
</reference>
<reference key="3">
    <citation type="journal article" date="2010" name="Mech. Dev.">
        <title>The RNA-binding protein Seb4/RBM24 is a direct target of MyoD and is required for myogenesis during Xenopus early development.</title>
        <authorList>
            <person name="Li H.Y."/>
            <person name="Bourdelas A."/>
            <person name="Carron C."/>
            <person name="Shi D.L."/>
        </authorList>
    </citation>
    <scope>FUNCTION</scope>
    <scope>INDUCTION</scope>
</reference>
<reference key="4">
    <citation type="journal article" date="2014" name="Mech. Dev.">
        <title>The RNA-binding protein Rbm24 is transiently expressed in myoblasts and is required for myogenic differentiation during vertebrate development.</title>
        <authorList>
            <person name="Grifone R."/>
            <person name="Xie X."/>
            <person name="Bourgeois A."/>
            <person name="Saquet A."/>
            <person name="Duprez D."/>
            <person name="Shi D.L."/>
        </authorList>
    </citation>
    <scope>DEVELOPMENTAL STAGE</scope>
</reference>
<dbReference type="EMBL" id="AF223427">
    <property type="protein sequence ID" value="AAF81070.1"/>
    <property type="molecule type" value="mRNA"/>
</dbReference>
<dbReference type="EMBL" id="BC072812">
    <property type="protein sequence ID" value="AAH72812.1"/>
    <property type="molecule type" value="mRNA"/>
</dbReference>
<dbReference type="RefSeq" id="NP_001080995.1">
    <property type="nucleotide sequence ID" value="NM_001087526.1"/>
</dbReference>
<dbReference type="SMR" id="Q6GQD3"/>
<dbReference type="DNASU" id="394318"/>
<dbReference type="GeneID" id="394318"/>
<dbReference type="KEGG" id="xla:394318"/>
<dbReference type="AGR" id="Xenbase:XB-GENE-866276"/>
<dbReference type="CTD" id="394318"/>
<dbReference type="Xenbase" id="XB-GENE-866276">
    <property type="gene designation" value="rbm24.L"/>
</dbReference>
<dbReference type="OrthoDB" id="4207594at2759"/>
<dbReference type="Proteomes" id="UP000186698">
    <property type="component" value="Chromosome 6L"/>
</dbReference>
<dbReference type="Bgee" id="394318">
    <property type="expression patterns" value="Expressed in muscle tissue and 18 other cell types or tissues"/>
</dbReference>
<dbReference type="GO" id="GO:0005737">
    <property type="term" value="C:cytoplasm"/>
    <property type="evidence" value="ECO:0000250"/>
    <property type="project" value="UniProtKB"/>
</dbReference>
<dbReference type="GO" id="GO:0005829">
    <property type="term" value="C:cytosol"/>
    <property type="evidence" value="ECO:0000318"/>
    <property type="project" value="GO_Central"/>
</dbReference>
<dbReference type="GO" id="GO:0005634">
    <property type="term" value="C:nucleus"/>
    <property type="evidence" value="ECO:0000318"/>
    <property type="project" value="GO_Central"/>
</dbReference>
<dbReference type="GO" id="GO:0035925">
    <property type="term" value="F:mRNA 3'-UTR AU-rich region binding"/>
    <property type="evidence" value="ECO:0000250"/>
    <property type="project" value="UniProtKB"/>
</dbReference>
<dbReference type="GO" id="GO:0003730">
    <property type="term" value="F:mRNA 3'-UTR binding"/>
    <property type="evidence" value="ECO:0000250"/>
    <property type="project" value="UniProtKB"/>
</dbReference>
<dbReference type="GO" id="GO:1990715">
    <property type="term" value="F:mRNA CDS binding"/>
    <property type="evidence" value="ECO:0000250"/>
    <property type="project" value="UniProtKB"/>
</dbReference>
<dbReference type="GO" id="GO:0097157">
    <property type="term" value="F:pre-mRNA intronic binding"/>
    <property type="evidence" value="ECO:0000250"/>
    <property type="project" value="UniProtKB"/>
</dbReference>
<dbReference type="GO" id="GO:1990825">
    <property type="term" value="F:sequence-specific mRNA binding"/>
    <property type="evidence" value="ECO:0000250"/>
    <property type="project" value="UniProtKB"/>
</dbReference>
<dbReference type="GO" id="GO:0061158">
    <property type="term" value="P:3'-UTR-mediated mRNA destabilization"/>
    <property type="evidence" value="ECO:0000250"/>
    <property type="project" value="UniProtKB"/>
</dbReference>
<dbReference type="GO" id="GO:0030154">
    <property type="term" value="P:cell differentiation"/>
    <property type="evidence" value="ECO:0007669"/>
    <property type="project" value="UniProtKB-KW"/>
</dbReference>
<dbReference type="GO" id="GO:0006974">
    <property type="term" value="P:DNA damage response"/>
    <property type="evidence" value="ECO:0000250"/>
    <property type="project" value="UniProtKB"/>
</dbReference>
<dbReference type="GO" id="GO:0061157">
    <property type="term" value="P:mRNA destabilization"/>
    <property type="evidence" value="ECO:0000250"/>
    <property type="project" value="UniProtKB"/>
</dbReference>
<dbReference type="GO" id="GO:0006397">
    <property type="term" value="P:mRNA processing"/>
    <property type="evidence" value="ECO:0007669"/>
    <property type="project" value="UniProtKB-KW"/>
</dbReference>
<dbReference type="GO" id="GO:0048255">
    <property type="term" value="P:mRNA stabilization"/>
    <property type="evidence" value="ECO:0000250"/>
    <property type="project" value="UniProtKB"/>
</dbReference>
<dbReference type="GO" id="GO:2000766">
    <property type="term" value="P:negative regulation of cytoplasmic translation"/>
    <property type="evidence" value="ECO:0000250"/>
    <property type="project" value="UniProtKB"/>
</dbReference>
<dbReference type="GO" id="GO:1905870">
    <property type="term" value="P:positive regulation of 3'-UTR-mediated mRNA stabilization"/>
    <property type="evidence" value="ECO:0000250"/>
    <property type="project" value="UniProtKB"/>
</dbReference>
<dbReference type="GO" id="GO:0045663">
    <property type="term" value="P:positive regulation of myoblast differentiation"/>
    <property type="evidence" value="ECO:0000250"/>
    <property type="project" value="UniProtKB"/>
</dbReference>
<dbReference type="GO" id="GO:0010831">
    <property type="term" value="P:positive regulation of myotube differentiation"/>
    <property type="evidence" value="ECO:0000250"/>
    <property type="project" value="UniProtKB"/>
</dbReference>
<dbReference type="GO" id="GO:1902811">
    <property type="term" value="P:positive regulation of skeletal muscle fiber differentiation"/>
    <property type="evidence" value="ECO:0000250"/>
    <property type="project" value="UniProtKB"/>
</dbReference>
<dbReference type="GO" id="GO:2000738">
    <property type="term" value="P:positive regulation of stem cell differentiation"/>
    <property type="evidence" value="ECO:0000250"/>
    <property type="project" value="UniProtKB"/>
</dbReference>
<dbReference type="GO" id="GO:0000381">
    <property type="term" value="P:regulation of alternative mRNA splicing, via spliceosome"/>
    <property type="evidence" value="ECO:0000250"/>
    <property type="project" value="UniProtKB"/>
</dbReference>
<dbReference type="GO" id="GO:0043488">
    <property type="term" value="P:regulation of mRNA stability"/>
    <property type="evidence" value="ECO:0000250"/>
    <property type="project" value="UniProtKB"/>
</dbReference>
<dbReference type="GO" id="GO:0010830">
    <property type="term" value="P:regulation of myotube differentiation"/>
    <property type="evidence" value="ECO:0000315"/>
    <property type="project" value="UniProtKB"/>
</dbReference>
<dbReference type="GO" id="GO:0008380">
    <property type="term" value="P:RNA splicing"/>
    <property type="evidence" value="ECO:0007669"/>
    <property type="project" value="UniProtKB-KW"/>
</dbReference>
<dbReference type="CDD" id="cd12384">
    <property type="entry name" value="RRM_RBM24_RBM38_like"/>
    <property type="match status" value="1"/>
</dbReference>
<dbReference type="FunFam" id="3.30.70.330:FF:000077">
    <property type="entry name" value="RNA-binding motif protein 24"/>
    <property type="match status" value="1"/>
</dbReference>
<dbReference type="Gene3D" id="3.30.70.330">
    <property type="match status" value="1"/>
</dbReference>
<dbReference type="InterPro" id="IPR012677">
    <property type="entry name" value="Nucleotide-bd_a/b_plait_sf"/>
</dbReference>
<dbReference type="InterPro" id="IPR035979">
    <property type="entry name" value="RBD_domain_sf"/>
</dbReference>
<dbReference type="InterPro" id="IPR050886">
    <property type="entry name" value="RNA-binding_reg"/>
</dbReference>
<dbReference type="InterPro" id="IPR000504">
    <property type="entry name" value="RRM_dom"/>
</dbReference>
<dbReference type="PANTHER" id="PTHR48024">
    <property type="entry name" value="GEO13361P1-RELATED"/>
    <property type="match status" value="1"/>
</dbReference>
<dbReference type="PANTHER" id="PTHR48024:SF10">
    <property type="entry name" value="RNA-BINDING PROTEIN 24"/>
    <property type="match status" value="1"/>
</dbReference>
<dbReference type="Pfam" id="PF00076">
    <property type="entry name" value="RRM_1"/>
    <property type="match status" value="1"/>
</dbReference>
<dbReference type="SMART" id="SM00360">
    <property type="entry name" value="RRM"/>
    <property type="match status" value="1"/>
</dbReference>
<dbReference type="SUPFAM" id="SSF54928">
    <property type="entry name" value="RNA-binding domain, RBD"/>
    <property type="match status" value="1"/>
</dbReference>
<dbReference type="PROSITE" id="PS50102">
    <property type="entry name" value="RRM"/>
    <property type="match status" value="1"/>
</dbReference>
<comment type="function">
    <text evidence="1 2 5">Multifunctional RNA-binding protein involved in the regulation of pre-mRNA splicing, mRNA stability and mRNA translation important for cell fate decision and differentiation. Plays a major role in pre-mRNA alternative splicing regulation. Mediates preferentially muscle-specific exon inclusion in numerous mRNAs important for striated cardiac and skeletal muscle cell differentiation. Binds to intronic splicing enhancer (ISE) composed of stretches of GU-rich motifs localized in flanking intron of exon that will be included by alternative splicing. Involved in embryonic stem cell (ESC) transition to cardiac cell differentiation by promoting pre-mRNA alternative splicing events of several pluripotency and/or differentiation genes. Plays a role in the regulation of mRNA stability and mRNA translation to which it is bound. Involved in myogenic differentiation by regulating myog levels (PubMed:20338237). Binds to a huge amount of mRNAs. Required for embryonic heart development, sarcomer and M-band formation in striated muscles (PubMed:20338237).</text>
</comment>
<comment type="subcellular location">
    <subcellularLocation>
        <location evidence="4">Nucleus</location>
    </subcellularLocation>
    <subcellularLocation>
        <location evidence="4">Cytoplasm</location>
    </subcellularLocation>
</comment>
<comment type="developmental stage">
    <text evidence="4 6">Expressed both maternally and zygotically (PubMed:10842088). Zygotic transcription is initiated in the early gastrula embryo in paraxial mesoderm that is fated to give rise to somites (PubMed:10842088). During the course of gastrulation and neurulation, it is expressed in somitic paraxial mesoderm is centered within the myoD expression domain (PubMed:10842088). Expressed in developing somites at larval stages (PubMed:25217815). As development proceeds it is also expressed in the cardiac primordium and the lens vesicle (PubMed:10842088, PubMed:25217815). Expressed in hypaxial migrating cells and branchiomeric cranial muscles (PubMed:25217815). In the heart expression is confined to the myocardium (PubMed:10842088).</text>
</comment>
<comment type="induction">
    <text evidence="5">Up-regulated by the myogenic factor myoD during gastrulation.</text>
</comment>
<comment type="domain">
    <text evidence="2">The RRM domain is necessary for mRNA stability and mRNA translation regulation.</text>
</comment>